<accession>A5EWT0</accession>
<reference key="1">
    <citation type="journal article" date="2007" name="Nat. Biotechnol.">
        <title>Genome sequence and identification of candidate vaccine antigens from the animal pathogen Dichelobacter nodosus.</title>
        <authorList>
            <person name="Myers G.S.A."/>
            <person name="Parker D."/>
            <person name="Al-Hasani K."/>
            <person name="Kennan R.M."/>
            <person name="Seemann T."/>
            <person name="Ren Q."/>
            <person name="Badger J.H."/>
            <person name="Selengut J.D."/>
            <person name="Deboy R.T."/>
            <person name="Tettelin H."/>
            <person name="Boyce J.D."/>
            <person name="McCarl V.P."/>
            <person name="Han X."/>
            <person name="Nelson W.C."/>
            <person name="Madupu R."/>
            <person name="Mohamoud Y."/>
            <person name="Holley T."/>
            <person name="Fedorova N."/>
            <person name="Khouri H."/>
            <person name="Bottomley S.P."/>
            <person name="Whittington R.J."/>
            <person name="Adler B."/>
            <person name="Songer J.G."/>
            <person name="Rood J.I."/>
            <person name="Paulsen I.T."/>
        </authorList>
    </citation>
    <scope>NUCLEOTIDE SEQUENCE [LARGE SCALE GENOMIC DNA]</scope>
    <source>
        <strain>VCS1703A</strain>
    </source>
</reference>
<feature type="chain" id="PRO_1000022060" description="Isoleucine--tRNA ligase">
    <location>
        <begin position="1"/>
        <end position="924"/>
    </location>
</feature>
<feature type="short sequence motif" description="'HIGH' region">
    <location>
        <begin position="58"/>
        <end position="68"/>
    </location>
</feature>
<feature type="short sequence motif" description="'KMSKS' region">
    <location>
        <begin position="602"/>
        <end position="606"/>
    </location>
</feature>
<feature type="binding site" evidence="1">
    <location>
        <position position="561"/>
    </location>
    <ligand>
        <name>L-isoleucyl-5'-AMP</name>
        <dbReference type="ChEBI" id="CHEBI:178002"/>
    </ligand>
</feature>
<feature type="binding site" evidence="1">
    <location>
        <position position="605"/>
    </location>
    <ligand>
        <name>ATP</name>
        <dbReference type="ChEBI" id="CHEBI:30616"/>
    </ligand>
</feature>
<feature type="binding site" evidence="1">
    <location>
        <position position="887"/>
    </location>
    <ligand>
        <name>Zn(2+)</name>
        <dbReference type="ChEBI" id="CHEBI:29105"/>
    </ligand>
</feature>
<feature type="binding site" evidence="1">
    <location>
        <position position="890"/>
    </location>
    <ligand>
        <name>Zn(2+)</name>
        <dbReference type="ChEBI" id="CHEBI:29105"/>
    </ligand>
</feature>
<feature type="binding site" evidence="1">
    <location>
        <position position="907"/>
    </location>
    <ligand>
        <name>Zn(2+)</name>
        <dbReference type="ChEBI" id="CHEBI:29105"/>
    </ligand>
</feature>
<feature type="binding site" evidence="1">
    <location>
        <position position="910"/>
    </location>
    <ligand>
        <name>Zn(2+)</name>
        <dbReference type="ChEBI" id="CHEBI:29105"/>
    </ligand>
</feature>
<gene>
    <name evidence="1" type="primary">ileS</name>
    <name type="ordered locus">DNO_0083</name>
</gene>
<proteinExistence type="inferred from homology"/>
<evidence type="ECO:0000255" key="1">
    <source>
        <dbReference type="HAMAP-Rule" id="MF_02002"/>
    </source>
</evidence>
<comment type="function">
    <text evidence="1">Catalyzes the attachment of isoleucine to tRNA(Ile). As IleRS can inadvertently accommodate and process structurally similar amino acids such as valine, to avoid such errors it has two additional distinct tRNA(Ile)-dependent editing activities. One activity is designated as 'pretransfer' editing and involves the hydrolysis of activated Val-AMP. The other activity is designated 'posttransfer' editing and involves deacylation of mischarged Val-tRNA(Ile).</text>
</comment>
<comment type="catalytic activity">
    <reaction evidence="1">
        <text>tRNA(Ile) + L-isoleucine + ATP = L-isoleucyl-tRNA(Ile) + AMP + diphosphate</text>
        <dbReference type="Rhea" id="RHEA:11060"/>
        <dbReference type="Rhea" id="RHEA-COMP:9666"/>
        <dbReference type="Rhea" id="RHEA-COMP:9695"/>
        <dbReference type="ChEBI" id="CHEBI:30616"/>
        <dbReference type="ChEBI" id="CHEBI:33019"/>
        <dbReference type="ChEBI" id="CHEBI:58045"/>
        <dbReference type="ChEBI" id="CHEBI:78442"/>
        <dbReference type="ChEBI" id="CHEBI:78528"/>
        <dbReference type="ChEBI" id="CHEBI:456215"/>
        <dbReference type="EC" id="6.1.1.5"/>
    </reaction>
</comment>
<comment type="cofactor">
    <cofactor evidence="1">
        <name>Zn(2+)</name>
        <dbReference type="ChEBI" id="CHEBI:29105"/>
    </cofactor>
    <text evidence="1">Binds 1 zinc ion per subunit.</text>
</comment>
<comment type="subunit">
    <text evidence="1">Monomer.</text>
</comment>
<comment type="subcellular location">
    <subcellularLocation>
        <location evidence="1">Cytoplasm</location>
    </subcellularLocation>
</comment>
<comment type="domain">
    <text evidence="1">IleRS has two distinct active sites: one for aminoacylation and one for editing. The misactivated valine is translocated from the active site to the editing site, which sterically excludes the correctly activated isoleucine. The single editing site contains two valyl binding pockets, one specific for each substrate (Val-AMP or Val-tRNA(Ile)).</text>
</comment>
<comment type="similarity">
    <text evidence="1">Belongs to the class-I aminoacyl-tRNA synthetase family. IleS type 1 subfamily.</text>
</comment>
<keyword id="KW-0030">Aminoacyl-tRNA synthetase</keyword>
<keyword id="KW-0067">ATP-binding</keyword>
<keyword id="KW-0963">Cytoplasm</keyword>
<keyword id="KW-0436">Ligase</keyword>
<keyword id="KW-0479">Metal-binding</keyword>
<keyword id="KW-0547">Nucleotide-binding</keyword>
<keyword id="KW-0648">Protein biosynthesis</keyword>
<keyword id="KW-1185">Reference proteome</keyword>
<keyword id="KW-0862">Zinc</keyword>
<name>SYI_DICNV</name>
<dbReference type="EC" id="6.1.1.5" evidence="1"/>
<dbReference type="EMBL" id="CP000513">
    <property type="protein sequence ID" value="ABQ13975.1"/>
    <property type="molecule type" value="Genomic_DNA"/>
</dbReference>
<dbReference type="RefSeq" id="WP_011927835.1">
    <property type="nucleotide sequence ID" value="NC_009446.1"/>
</dbReference>
<dbReference type="SMR" id="A5EWT0"/>
<dbReference type="STRING" id="246195.DNO_0083"/>
<dbReference type="KEGG" id="dno:DNO_0083"/>
<dbReference type="eggNOG" id="COG0060">
    <property type="taxonomic scope" value="Bacteria"/>
</dbReference>
<dbReference type="HOGENOM" id="CLU_001493_7_1_6"/>
<dbReference type="OrthoDB" id="9810365at2"/>
<dbReference type="Proteomes" id="UP000000248">
    <property type="component" value="Chromosome"/>
</dbReference>
<dbReference type="GO" id="GO:0005829">
    <property type="term" value="C:cytosol"/>
    <property type="evidence" value="ECO:0007669"/>
    <property type="project" value="TreeGrafter"/>
</dbReference>
<dbReference type="GO" id="GO:0002161">
    <property type="term" value="F:aminoacyl-tRNA deacylase activity"/>
    <property type="evidence" value="ECO:0007669"/>
    <property type="project" value="InterPro"/>
</dbReference>
<dbReference type="GO" id="GO:0005524">
    <property type="term" value="F:ATP binding"/>
    <property type="evidence" value="ECO:0007669"/>
    <property type="project" value="UniProtKB-UniRule"/>
</dbReference>
<dbReference type="GO" id="GO:0004822">
    <property type="term" value="F:isoleucine-tRNA ligase activity"/>
    <property type="evidence" value="ECO:0007669"/>
    <property type="project" value="UniProtKB-UniRule"/>
</dbReference>
<dbReference type="GO" id="GO:0000049">
    <property type="term" value="F:tRNA binding"/>
    <property type="evidence" value="ECO:0007669"/>
    <property type="project" value="InterPro"/>
</dbReference>
<dbReference type="GO" id="GO:0008270">
    <property type="term" value="F:zinc ion binding"/>
    <property type="evidence" value="ECO:0007669"/>
    <property type="project" value="UniProtKB-UniRule"/>
</dbReference>
<dbReference type="GO" id="GO:0006428">
    <property type="term" value="P:isoleucyl-tRNA aminoacylation"/>
    <property type="evidence" value="ECO:0007669"/>
    <property type="project" value="UniProtKB-UniRule"/>
</dbReference>
<dbReference type="CDD" id="cd07960">
    <property type="entry name" value="Anticodon_Ia_Ile_BEm"/>
    <property type="match status" value="1"/>
</dbReference>
<dbReference type="FunFam" id="1.10.730.20:FF:000001">
    <property type="entry name" value="Isoleucine--tRNA ligase"/>
    <property type="match status" value="1"/>
</dbReference>
<dbReference type="FunFam" id="3.40.50.620:FF:000042">
    <property type="entry name" value="Isoleucine--tRNA ligase"/>
    <property type="match status" value="1"/>
</dbReference>
<dbReference type="FunFam" id="3.40.50.620:FF:000048">
    <property type="entry name" value="Isoleucine--tRNA ligase"/>
    <property type="match status" value="1"/>
</dbReference>
<dbReference type="Gene3D" id="1.10.730.20">
    <property type="match status" value="1"/>
</dbReference>
<dbReference type="Gene3D" id="3.40.50.620">
    <property type="entry name" value="HUPs"/>
    <property type="match status" value="2"/>
</dbReference>
<dbReference type="Gene3D" id="3.90.740.10">
    <property type="entry name" value="Valyl/Leucyl/Isoleucyl-tRNA synthetase, editing domain"/>
    <property type="match status" value="1"/>
</dbReference>
<dbReference type="HAMAP" id="MF_02002">
    <property type="entry name" value="Ile_tRNA_synth_type1"/>
    <property type="match status" value="1"/>
</dbReference>
<dbReference type="InterPro" id="IPR001412">
    <property type="entry name" value="aa-tRNA-synth_I_CS"/>
</dbReference>
<dbReference type="InterPro" id="IPR002300">
    <property type="entry name" value="aa-tRNA-synth_Ia"/>
</dbReference>
<dbReference type="InterPro" id="IPR033708">
    <property type="entry name" value="Anticodon_Ile_BEm"/>
</dbReference>
<dbReference type="InterPro" id="IPR002301">
    <property type="entry name" value="Ile-tRNA-ligase"/>
</dbReference>
<dbReference type="InterPro" id="IPR023585">
    <property type="entry name" value="Ile-tRNA-ligase_type1"/>
</dbReference>
<dbReference type="InterPro" id="IPR050081">
    <property type="entry name" value="Ile-tRNA_ligase"/>
</dbReference>
<dbReference type="InterPro" id="IPR013155">
    <property type="entry name" value="M/V/L/I-tRNA-synth_anticd-bd"/>
</dbReference>
<dbReference type="InterPro" id="IPR014729">
    <property type="entry name" value="Rossmann-like_a/b/a_fold"/>
</dbReference>
<dbReference type="InterPro" id="IPR009080">
    <property type="entry name" value="tRNAsynth_Ia_anticodon-bd"/>
</dbReference>
<dbReference type="InterPro" id="IPR009008">
    <property type="entry name" value="Val/Leu/Ile-tRNA-synth_edit"/>
</dbReference>
<dbReference type="InterPro" id="IPR010663">
    <property type="entry name" value="Znf_FPG/IleRS"/>
</dbReference>
<dbReference type="NCBIfam" id="TIGR00392">
    <property type="entry name" value="ileS"/>
    <property type="match status" value="1"/>
</dbReference>
<dbReference type="PANTHER" id="PTHR42765:SF1">
    <property type="entry name" value="ISOLEUCINE--TRNA LIGASE, MITOCHONDRIAL"/>
    <property type="match status" value="1"/>
</dbReference>
<dbReference type="PANTHER" id="PTHR42765">
    <property type="entry name" value="SOLEUCYL-TRNA SYNTHETASE"/>
    <property type="match status" value="1"/>
</dbReference>
<dbReference type="Pfam" id="PF08264">
    <property type="entry name" value="Anticodon_1"/>
    <property type="match status" value="1"/>
</dbReference>
<dbReference type="Pfam" id="PF00133">
    <property type="entry name" value="tRNA-synt_1"/>
    <property type="match status" value="1"/>
</dbReference>
<dbReference type="Pfam" id="PF06827">
    <property type="entry name" value="zf-FPG_IleRS"/>
    <property type="match status" value="1"/>
</dbReference>
<dbReference type="PRINTS" id="PR00984">
    <property type="entry name" value="TRNASYNTHILE"/>
</dbReference>
<dbReference type="SUPFAM" id="SSF47323">
    <property type="entry name" value="Anticodon-binding domain of a subclass of class I aminoacyl-tRNA synthetases"/>
    <property type="match status" value="1"/>
</dbReference>
<dbReference type="SUPFAM" id="SSF52374">
    <property type="entry name" value="Nucleotidylyl transferase"/>
    <property type="match status" value="1"/>
</dbReference>
<dbReference type="SUPFAM" id="SSF50677">
    <property type="entry name" value="ValRS/IleRS/LeuRS editing domain"/>
    <property type="match status" value="1"/>
</dbReference>
<dbReference type="PROSITE" id="PS00178">
    <property type="entry name" value="AA_TRNA_LIGASE_I"/>
    <property type="match status" value="1"/>
</dbReference>
<sequence>MADYKHTLNLPQTDFPMRGNLAQREPEQLRWWQEHEIYRKQREAFADCPTFMLHDGPPYANGQIHVGHALNKTLKDIIIKSRHLLGYNSPYVPGWDCHGLPIEQKVEQKIGKPNQKVSATEFRAACRRYAAEQVALQKDGFMRLGIFGFWDQPYLTMNFETEAQIVRALRDIVAAGHVTQGFKPINWCFDCASSLAEAEVEYQDKTSYSIDVAFAVKDVAALAKIMHADVVPAAVDVVIWTTTPWTLPANVAVSIHPEFYYVLVEIEGWYCVVAEELIPALKSRWKKSADWRICGRALGKDLDRLTLRHPFIDRDVLLINGTHVTLDAGTGCVHTAPAHGVEDYDVCQQYGIDLIHCVLGNGLYNDDTPHFAGQHIFAAEPQIIELLQTQNRLIAVEKITHSYPHCWRHKTPTIYRATTQWFISMDKAGLRQKALDGLNEVAFTPDWGKPRLLNMIAHRPDWCISRQRYWGVPLCFVVDKQTGQLHPDIVNIMDKAASAIEQKGVEAWYELSLDTLLSGKEVDRYEKLNDVLDVWFDSGTTHYSVLKKRAELSYPADLYLEGSDQHRGWFHSSLLTASAITGKPPYKALLTHGFTVDEDGRKMSKSLGNVVDPNQVIKTLGADILRLWVASADYTAEVSLSPNILNQRADAYRRMRNTCRFLLANLHDFDPEKNSVAYEKLLPLDRYVIAVAHDLQEKIKKLYVSYDFHLIYQEIFNFCSVMLGGFYLDVIKDRQYTVAQNALARRSAQTAIFHIIEAMVRWLAPILSFTAEEIWRYLPGKREESVFLTKFYEGLQPLNDDFLSMHDWELLLQLREKVNAALEKARNQGIIGGSLEAMVVLHLPPQEYEIAARFEQELRFILIVSAVNVQPSAALSIEVQHAIGEKCERCWHYLPDVGTDHQHPTLCKRCIENVDGGGELRRFA</sequence>
<organism>
    <name type="scientific">Dichelobacter nodosus (strain VCS1703A)</name>
    <dbReference type="NCBI Taxonomy" id="246195"/>
    <lineage>
        <taxon>Bacteria</taxon>
        <taxon>Pseudomonadati</taxon>
        <taxon>Pseudomonadota</taxon>
        <taxon>Gammaproteobacteria</taxon>
        <taxon>Cardiobacteriales</taxon>
        <taxon>Cardiobacteriaceae</taxon>
        <taxon>Dichelobacter</taxon>
    </lineage>
</organism>
<protein>
    <recommendedName>
        <fullName evidence="1">Isoleucine--tRNA ligase</fullName>
        <ecNumber evidence="1">6.1.1.5</ecNumber>
    </recommendedName>
    <alternativeName>
        <fullName evidence="1">Isoleucyl-tRNA synthetase</fullName>
        <shortName evidence="1">IleRS</shortName>
    </alternativeName>
</protein>